<keyword id="KW-0028">Amino-acid biosynthesis</keyword>
<keyword id="KW-0057">Aromatic amino acid biosynthesis</keyword>
<keyword id="KW-0067">ATP-binding</keyword>
<keyword id="KW-0963">Cytoplasm</keyword>
<keyword id="KW-0418">Kinase</keyword>
<keyword id="KW-0460">Magnesium</keyword>
<keyword id="KW-0479">Metal-binding</keyword>
<keyword id="KW-0547">Nucleotide-binding</keyword>
<keyword id="KW-0808">Transferase</keyword>
<proteinExistence type="inferred from homology"/>
<reference key="1">
    <citation type="journal article" date="2005" name="Science">
        <title>Extensive DNA inversions in the B. fragilis genome control variable gene expression.</title>
        <authorList>
            <person name="Cerdeno-Tarraga A.-M."/>
            <person name="Patrick S."/>
            <person name="Crossman L.C."/>
            <person name="Blakely G."/>
            <person name="Abratt V."/>
            <person name="Lennard N."/>
            <person name="Poxton I."/>
            <person name="Duerden B."/>
            <person name="Harris B."/>
            <person name="Quail M.A."/>
            <person name="Barron A."/>
            <person name="Clark L."/>
            <person name="Corton C."/>
            <person name="Doggett J."/>
            <person name="Holden M.T.G."/>
            <person name="Larke N."/>
            <person name="Line A."/>
            <person name="Lord A."/>
            <person name="Norbertczak H."/>
            <person name="Ormond D."/>
            <person name="Price C."/>
            <person name="Rabbinowitsch E."/>
            <person name="Woodward J."/>
            <person name="Barrell B.G."/>
            <person name="Parkhill J."/>
        </authorList>
    </citation>
    <scope>NUCLEOTIDE SEQUENCE [LARGE SCALE GENOMIC DNA]</scope>
    <source>
        <strain>ATCC 25285 / DSM 2151 / CCUG 4856 / JCM 11019 / LMG 10263 / NCTC 9343 / Onslow / VPI 2553 / EN-2</strain>
    </source>
</reference>
<dbReference type="EC" id="2.7.1.71" evidence="1"/>
<dbReference type="EMBL" id="CR626927">
    <property type="protein sequence ID" value="CAH05969.1"/>
    <property type="molecule type" value="Genomic_DNA"/>
</dbReference>
<dbReference type="RefSeq" id="WP_005783866.1">
    <property type="nucleotide sequence ID" value="NZ_UFTH01000001.1"/>
</dbReference>
<dbReference type="SMR" id="Q5LIQ7"/>
<dbReference type="PaxDb" id="272559-BF9343_0190"/>
<dbReference type="KEGG" id="bfs:BF9343_0190"/>
<dbReference type="eggNOG" id="COG0703">
    <property type="taxonomic scope" value="Bacteria"/>
</dbReference>
<dbReference type="HOGENOM" id="CLU_057607_4_0_10"/>
<dbReference type="UniPathway" id="UPA00053">
    <property type="reaction ID" value="UER00088"/>
</dbReference>
<dbReference type="Proteomes" id="UP000006731">
    <property type="component" value="Chromosome"/>
</dbReference>
<dbReference type="GO" id="GO:0005829">
    <property type="term" value="C:cytosol"/>
    <property type="evidence" value="ECO:0007669"/>
    <property type="project" value="TreeGrafter"/>
</dbReference>
<dbReference type="GO" id="GO:0005524">
    <property type="term" value="F:ATP binding"/>
    <property type="evidence" value="ECO:0007669"/>
    <property type="project" value="UniProtKB-UniRule"/>
</dbReference>
<dbReference type="GO" id="GO:0000287">
    <property type="term" value="F:magnesium ion binding"/>
    <property type="evidence" value="ECO:0007669"/>
    <property type="project" value="UniProtKB-UniRule"/>
</dbReference>
<dbReference type="GO" id="GO:0004765">
    <property type="term" value="F:shikimate kinase activity"/>
    <property type="evidence" value="ECO:0007669"/>
    <property type="project" value="UniProtKB-UniRule"/>
</dbReference>
<dbReference type="GO" id="GO:0008652">
    <property type="term" value="P:amino acid biosynthetic process"/>
    <property type="evidence" value="ECO:0007669"/>
    <property type="project" value="UniProtKB-KW"/>
</dbReference>
<dbReference type="GO" id="GO:0009073">
    <property type="term" value="P:aromatic amino acid family biosynthetic process"/>
    <property type="evidence" value="ECO:0007669"/>
    <property type="project" value="UniProtKB-KW"/>
</dbReference>
<dbReference type="GO" id="GO:0009423">
    <property type="term" value="P:chorismate biosynthetic process"/>
    <property type="evidence" value="ECO:0007669"/>
    <property type="project" value="UniProtKB-UniRule"/>
</dbReference>
<dbReference type="CDD" id="cd00464">
    <property type="entry name" value="SK"/>
    <property type="match status" value="1"/>
</dbReference>
<dbReference type="Gene3D" id="3.40.50.300">
    <property type="entry name" value="P-loop containing nucleotide triphosphate hydrolases"/>
    <property type="match status" value="1"/>
</dbReference>
<dbReference type="HAMAP" id="MF_00109">
    <property type="entry name" value="Shikimate_kinase"/>
    <property type="match status" value="1"/>
</dbReference>
<dbReference type="InterPro" id="IPR027417">
    <property type="entry name" value="P-loop_NTPase"/>
</dbReference>
<dbReference type="InterPro" id="IPR031322">
    <property type="entry name" value="Shikimate/glucono_kinase"/>
</dbReference>
<dbReference type="InterPro" id="IPR000623">
    <property type="entry name" value="Shikimate_kinase/TSH1"/>
</dbReference>
<dbReference type="NCBIfam" id="NF010555">
    <property type="entry name" value="PRK13949.1"/>
    <property type="match status" value="1"/>
</dbReference>
<dbReference type="PANTHER" id="PTHR21087">
    <property type="entry name" value="SHIKIMATE KINASE"/>
    <property type="match status" value="1"/>
</dbReference>
<dbReference type="PANTHER" id="PTHR21087:SF16">
    <property type="entry name" value="SHIKIMATE KINASE 1, CHLOROPLASTIC"/>
    <property type="match status" value="1"/>
</dbReference>
<dbReference type="Pfam" id="PF01202">
    <property type="entry name" value="SKI"/>
    <property type="match status" value="1"/>
</dbReference>
<dbReference type="PRINTS" id="PR01100">
    <property type="entry name" value="SHIKIMTKNASE"/>
</dbReference>
<dbReference type="SUPFAM" id="SSF52540">
    <property type="entry name" value="P-loop containing nucleoside triphosphate hydrolases"/>
    <property type="match status" value="1"/>
</dbReference>
<name>AROK_BACFN</name>
<sequence>MIRIFLTGYMGAGKTTLGKALARELHIPFIDLDWYIEERFHKTVGELFSERGEASFRELEKNMLHEVGEFEDVVISTGGGAPCFFDNMEYMNRVGTTVFLDVDPKVLFSRLRVAKQQRPILQGKKDDELLDFIVQALEKRAPFYRQANYIYCADKLEDRSQIETSVQQLRKLLNLHIAS</sequence>
<comment type="function">
    <text evidence="1">Catalyzes the specific phosphorylation of the 3-hydroxyl group of shikimic acid using ATP as a cosubstrate.</text>
</comment>
<comment type="catalytic activity">
    <reaction evidence="1">
        <text>shikimate + ATP = 3-phosphoshikimate + ADP + H(+)</text>
        <dbReference type="Rhea" id="RHEA:13121"/>
        <dbReference type="ChEBI" id="CHEBI:15378"/>
        <dbReference type="ChEBI" id="CHEBI:30616"/>
        <dbReference type="ChEBI" id="CHEBI:36208"/>
        <dbReference type="ChEBI" id="CHEBI:145989"/>
        <dbReference type="ChEBI" id="CHEBI:456216"/>
        <dbReference type="EC" id="2.7.1.71"/>
    </reaction>
</comment>
<comment type="cofactor">
    <cofactor evidence="1">
        <name>Mg(2+)</name>
        <dbReference type="ChEBI" id="CHEBI:18420"/>
    </cofactor>
    <text evidence="1">Binds 1 Mg(2+) ion per subunit.</text>
</comment>
<comment type="pathway">
    <text evidence="1">Metabolic intermediate biosynthesis; chorismate biosynthesis; chorismate from D-erythrose 4-phosphate and phosphoenolpyruvate: step 5/7.</text>
</comment>
<comment type="subunit">
    <text evidence="1">Monomer.</text>
</comment>
<comment type="subcellular location">
    <subcellularLocation>
        <location evidence="1">Cytoplasm</location>
    </subcellularLocation>
</comment>
<comment type="similarity">
    <text evidence="1">Belongs to the shikimate kinase family.</text>
</comment>
<accession>Q5LIQ7</accession>
<gene>
    <name evidence="1" type="primary">aroK</name>
    <name type="ordered locus">BF0192</name>
</gene>
<evidence type="ECO:0000255" key="1">
    <source>
        <dbReference type="HAMAP-Rule" id="MF_00109"/>
    </source>
</evidence>
<organism>
    <name type="scientific">Bacteroides fragilis (strain ATCC 25285 / DSM 2151 / CCUG 4856 / JCM 11019 / LMG 10263 / NCTC 9343 / Onslow / VPI 2553 / EN-2)</name>
    <dbReference type="NCBI Taxonomy" id="272559"/>
    <lineage>
        <taxon>Bacteria</taxon>
        <taxon>Pseudomonadati</taxon>
        <taxon>Bacteroidota</taxon>
        <taxon>Bacteroidia</taxon>
        <taxon>Bacteroidales</taxon>
        <taxon>Bacteroidaceae</taxon>
        <taxon>Bacteroides</taxon>
    </lineage>
</organism>
<protein>
    <recommendedName>
        <fullName evidence="1">Shikimate kinase</fullName>
        <shortName evidence="1">SK</shortName>
        <ecNumber evidence="1">2.7.1.71</ecNumber>
    </recommendedName>
</protein>
<feature type="chain" id="PRO_0000237843" description="Shikimate kinase">
    <location>
        <begin position="1"/>
        <end position="179"/>
    </location>
</feature>
<feature type="binding site" evidence="1">
    <location>
        <begin position="11"/>
        <end position="16"/>
    </location>
    <ligand>
        <name>ATP</name>
        <dbReference type="ChEBI" id="CHEBI:30616"/>
    </ligand>
</feature>
<feature type="binding site" evidence="1">
    <location>
        <position position="15"/>
    </location>
    <ligand>
        <name>Mg(2+)</name>
        <dbReference type="ChEBI" id="CHEBI:18420"/>
    </ligand>
</feature>
<feature type="binding site" evidence="1">
    <location>
        <position position="33"/>
    </location>
    <ligand>
        <name>substrate</name>
    </ligand>
</feature>
<feature type="binding site" evidence="1">
    <location>
        <position position="57"/>
    </location>
    <ligand>
        <name>substrate</name>
    </ligand>
</feature>
<feature type="binding site" evidence="1">
    <location>
        <position position="79"/>
    </location>
    <ligand>
        <name>substrate</name>
    </ligand>
</feature>
<feature type="binding site" evidence="1">
    <location>
        <position position="118"/>
    </location>
    <ligand>
        <name>ATP</name>
        <dbReference type="ChEBI" id="CHEBI:30616"/>
    </ligand>
</feature>
<feature type="binding site" evidence="1">
    <location>
        <position position="140"/>
    </location>
    <ligand>
        <name>substrate</name>
    </ligand>
</feature>